<comment type="function">
    <text evidence="1">Binds directly to 16S ribosomal RNA.</text>
</comment>
<comment type="similarity">
    <text evidence="1">Belongs to the bacterial ribosomal protein bS20 family.</text>
</comment>
<protein>
    <recommendedName>
        <fullName evidence="1">Small ribosomal subunit protein bS20</fullName>
    </recommendedName>
    <alternativeName>
        <fullName evidence="3">30S ribosomal protein S20</fullName>
    </alternativeName>
</protein>
<keyword id="KW-1185">Reference proteome</keyword>
<keyword id="KW-0687">Ribonucleoprotein</keyword>
<keyword id="KW-0689">Ribosomal protein</keyword>
<keyword id="KW-0694">RNA-binding</keyword>
<keyword id="KW-0699">rRNA-binding</keyword>
<gene>
    <name evidence="1" type="primary">rpsT</name>
    <name type="ordered locus">Pnuc_1756</name>
</gene>
<evidence type="ECO:0000255" key="1">
    <source>
        <dbReference type="HAMAP-Rule" id="MF_00500"/>
    </source>
</evidence>
<evidence type="ECO:0000256" key="2">
    <source>
        <dbReference type="SAM" id="MobiDB-lite"/>
    </source>
</evidence>
<evidence type="ECO:0000305" key="3"/>
<proteinExistence type="inferred from homology"/>
<accession>A4SZQ5</accession>
<name>RS20_POLAQ</name>
<organism>
    <name type="scientific">Polynucleobacter asymbioticus (strain DSM 18221 / CIP 109841 / QLW-P1DMWA-1)</name>
    <name type="common">Polynucleobacter necessarius subsp. asymbioticus</name>
    <dbReference type="NCBI Taxonomy" id="312153"/>
    <lineage>
        <taxon>Bacteria</taxon>
        <taxon>Pseudomonadati</taxon>
        <taxon>Pseudomonadota</taxon>
        <taxon>Betaproteobacteria</taxon>
        <taxon>Burkholderiales</taxon>
        <taxon>Burkholderiaceae</taxon>
        <taxon>Polynucleobacter</taxon>
    </lineage>
</organism>
<feature type="chain" id="PRO_1000081441" description="Small ribosomal subunit protein bS20">
    <location>
        <begin position="1"/>
        <end position="88"/>
    </location>
</feature>
<feature type="region of interest" description="Disordered" evidence="2">
    <location>
        <begin position="1"/>
        <end position="29"/>
    </location>
</feature>
<feature type="region of interest" description="Disordered" evidence="2">
    <location>
        <begin position="69"/>
        <end position="88"/>
    </location>
</feature>
<sequence length="88" mass="9471">MANTAQARKRARQAVKQNEHNSSLRSKLRTSIKAVRKAIETGDKAAAAKVFAATQATIDKIADKKIAHKNTASRQKSRLSAAIKAMAA</sequence>
<reference key="1">
    <citation type="journal article" date="2012" name="Stand. Genomic Sci.">
        <title>Complete genome sequence of Polynucleobacter necessarius subsp. asymbioticus type strain (QLW-P1DMWA-1(T)).</title>
        <authorList>
            <person name="Meincke L."/>
            <person name="Copeland A."/>
            <person name="Lapidus A."/>
            <person name="Lucas S."/>
            <person name="Berry K.W."/>
            <person name="Del Rio T.G."/>
            <person name="Hammon N."/>
            <person name="Dalin E."/>
            <person name="Tice H."/>
            <person name="Pitluck S."/>
            <person name="Richardson P."/>
            <person name="Bruce D."/>
            <person name="Goodwin L."/>
            <person name="Han C."/>
            <person name="Tapia R."/>
            <person name="Detter J.C."/>
            <person name="Schmutz J."/>
            <person name="Brettin T."/>
            <person name="Larimer F."/>
            <person name="Land M."/>
            <person name="Hauser L."/>
            <person name="Kyrpides N.C."/>
            <person name="Ivanova N."/>
            <person name="Goker M."/>
            <person name="Woyke T."/>
            <person name="Wu Q.L."/>
            <person name="Pockl M."/>
            <person name="Hahn M.W."/>
            <person name="Klenk H.P."/>
        </authorList>
    </citation>
    <scope>NUCLEOTIDE SEQUENCE [LARGE SCALE GENOMIC DNA]</scope>
    <source>
        <strain>DSM 18221 / CIP 109841 / QLW-P1DMWA-1</strain>
    </source>
</reference>
<dbReference type="EMBL" id="CP000655">
    <property type="protein sequence ID" value="ABP34969.1"/>
    <property type="molecule type" value="Genomic_DNA"/>
</dbReference>
<dbReference type="RefSeq" id="WP_011903592.1">
    <property type="nucleotide sequence ID" value="NC_009379.1"/>
</dbReference>
<dbReference type="SMR" id="A4SZQ5"/>
<dbReference type="GeneID" id="31482145"/>
<dbReference type="KEGG" id="pnu:Pnuc_1756"/>
<dbReference type="eggNOG" id="COG0268">
    <property type="taxonomic scope" value="Bacteria"/>
</dbReference>
<dbReference type="HOGENOM" id="CLU_160655_4_0_4"/>
<dbReference type="Proteomes" id="UP000000231">
    <property type="component" value="Chromosome"/>
</dbReference>
<dbReference type="GO" id="GO:0005829">
    <property type="term" value="C:cytosol"/>
    <property type="evidence" value="ECO:0007669"/>
    <property type="project" value="TreeGrafter"/>
</dbReference>
<dbReference type="GO" id="GO:0015935">
    <property type="term" value="C:small ribosomal subunit"/>
    <property type="evidence" value="ECO:0007669"/>
    <property type="project" value="TreeGrafter"/>
</dbReference>
<dbReference type="GO" id="GO:0070181">
    <property type="term" value="F:small ribosomal subunit rRNA binding"/>
    <property type="evidence" value="ECO:0007669"/>
    <property type="project" value="TreeGrafter"/>
</dbReference>
<dbReference type="GO" id="GO:0003735">
    <property type="term" value="F:structural constituent of ribosome"/>
    <property type="evidence" value="ECO:0007669"/>
    <property type="project" value="InterPro"/>
</dbReference>
<dbReference type="GO" id="GO:0006412">
    <property type="term" value="P:translation"/>
    <property type="evidence" value="ECO:0007669"/>
    <property type="project" value="UniProtKB-UniRule"/>
</dbReference>
<dbReference type="FunFam" id="1.20.58.110:FF:000001">
    <property type="entry name" value="30S ribosomal protein S20"/>
    <property type="match status" value="1"/>
</dbReference>
<dbReference type="Gene3D" id="1.20.58.110">
    <property type="entry name" value="Ribosomal protein S20"/>
    <property type="match status" value="1"/>
</dbReference>
<dbReference type="HAMAP" id="MF_00500">
    <property type="entry name" value="Ribosomal_bS20"/>
    <property type="match status" value="1"/>
</dbReference>
<dbReference type="InterPro" id="IPR002583">
    <property type="entry name" value="Ribosomal_bS20"/>
</dbReference>
<dbReference type="InterPro" id="IPR036510">
    <property type="entry name" value="Ribosomal_bS20_sf"/>
</dbReference>
<dbReference type="NCBIfam" id="TIGR00029">
    <property type="entry name" value="S20"/>
    <property type="match status" value="1"/>
</dbReference>
<dbReference type="PANTHER" id="PTHR33398">
    <property type="entry name" value="30S RIBOSOMAL PROTEIN S20"/>
    <property type="match status" value="1"/>
</dbReference>
<dbReference type="PANTHER" id="PTHR33398:SF1">
    <property type="entry name" value="SMALL RIBOSOMAL SUBUNIT PROTEIN BS20C"/>
    <property type="match status" value="1"/>
</dbReference>
<dbReference type="Pfam" id="PF01649">
    <property type="entry name" value="Ribosomal_S20p"/>
    <property type="match status" value="1"/>
</dbReference>
<dbReference type="SUPFAM" id="SSF46992">
    <property type="entry name" value="Ribosomal protein S20"/>
    <property type="match status" value="1"/>
</dbReference>